<organism evidence="14">
    <name type="scientific">Drosophila melanogaster</name>
    <name type="common">Fruit fly</name>
    <dbReference type="NCBI Taxonomy" id="7227"/>
    <lineage>
        <taxon>Eukaryota</taxon>
        <taxon>Metazoa</taxon>
        <taxon>Ecdysozoa</taxon>
        <taxon>Arthropoda</taxon>
        <taxon>Hexapoda</taxon>
        <taxon>Insecta</taxon>
        <taxon>Pterygota</taxon>
        <taxon>Neoptera</taxon>
        <taxon>Endopterygota</taxon>
        <taxon>Diptera</taxon>
        <taxon>Brachycera</taxon>
        <taxon>Muscomorpha</taxon>
        <taxon>Ephydroidea</taxon>
        <taxon>Drosophilidae</taxon>
        <taxon>Drosophila</taxon>
        <taxon>Sophophora</taxon>
    </lineage>
</organism>
<feature type="initiator methionine" description="Removed" evidence="3">
    <location>
        <position position="1"/>
    </location>
</feature>
<feature type="chain" id="PRO_0000445798" description="A-kinase anchor protein 200" evidence="9">
    <location>
        <begin position="2"/>
        <end position="753"/>
    </location>
</feature>
<feature type="region of interest" description="Disordered" evidence="1">
    <location>
        <begin position="1"/>
        <end position="345"/>
    </location>
</feature>
<feature type="region of interest" description="F-actin binding" evidence="3">
    <location>
        <begin position="119"/>
        <end position="148"/>
    </location>
</feature>
<feature type="region of interest" description="Interaction with PKA-R2" evidence="2 3">
    <location>
        <begin position="345"/>
        <end position="725"/>
    </location>
</feature>
<feature type="region of interest" description="Disordered" evidence="1">
    <location>
        <begin position="462"/>
        <end position="482"/>
    </location>
</feature>
<feature type="region of interest" description="Disordered" evidence="1">
    <location>
        <begin position="531"/>
        <end position="604"/>
    </location>
</feature>
<feature type="region of interest" description="Disordered" evidence="1">
    <location>
        <begin position="620"/>
        <end position="641"/>
    </location>
</feature>
<feature type="region of interest" description="Disordered" evidence="1">
    <location>
        <begin position="658"/>
        <end position="684"/>
    </location>
</feature>
<feature type="compositionally biased region" description="Basic and acidic residues" evidence="1">
    <location>
        <begin position="8"/>
        <end position="38"/>
    </location>
</feature>
<feature type="compositionally biased region" description="Basic and acidic residues" evidence="1">
    <location>
        <begin position="59"/>
        <end position="77"/>
    </location>
</feature>
<feature type="compositionally biased region" description="Low complexity" evidence="1">
    <location>
        <begin position="81"/>
        <end position="93"/>
    </location>
</feature>
<feature type="compositionally biased region" description="Basic residues" evidence="1">
    <location>
        <begin position="120"/>
        <end position="132"/>
    </location>
</feature>
<feature type="compositionally biased region" description="Basic and acidic residues" evidence="1">
    <location>
        <begin position="139"/>
        <end position="151"/>
    </location>
</feature>
<feature type="compositionally biased region" description="Low complexity" evidence="1">
    <location>
        <begin position="152"/>
        <end position="181"/>
    </location>
</feature>
<feature type="compositionally biased region" description="Basic and acidic residues" evidence="1">
    <location>
        <begin position="216"/>
        <end position="227"/>
    </location>
</feature>
<feature type="compositionally biased region" description="Low complexity" evidence="1">
    <location>
        <begin position="246"/>
        <end position="262"/>
    </location>
</feature>
<feature type="compositionally biased region" description="Pro residues" evidence="1">
    <location>
        <begin position="468"/>
        <end position="480"/>
    </location>
</feature>
<feature type="compositionally biased region" description="Basic and acidic residues" evidence="1">
    <location>
        <begin position="532"/>
        <end position="544"/>
    </location>
</feature>
<feature type="compositionally biased region" description="Low complexity" evidence="1">
    <location>
        <begin position="545"/>
        <end position="561"/>
    </location>
</feature>
<feature type="compositionally biased region" description="Basic and acidic residues" evidence="1">
    <location>
        <begin position="578"/>
        <end position="594"/>
    </location>
</feature>
<feature type="compositionally biased region" description="Low complexity" evidence="1">
    <location>
        <begin position="626"/>
        <end position="638"/>
    </location>
</feature>
<feature type="compositionally biased region" description="Basic and acidic residues" evidence="1">
    <location>
        <begin position="674"/>
        <end position="684"/>
    </location>
</feature>
<feature type="modified residue" description="Phosphoserine" evidence="3">
    <location>
        <position position="132"/>
    </location>
</feature>
<feature type="modified residue" description="Phosphoserine" evidence="3">
    <location>
        <position position="135"/>
    </location>
</feature>
<feature type="modified residue" description="Phosphoserine" evidence="3">
    <location>
        <position position="137"/>
    </location>
</feature>
<feature type="lipid moiety-binding region" description="N-myristoyl glycine" evidence="3">
    <location>
        <position position="2"/>
    </location>
</feature>
<feature type="splice variant" id="VSP_059969" description="In isoform B.">
    <location>
        <begin position="345"/>
        <end position="725"/>
    </location>
</feature>
<feature type="mutagenesis site" description="Loss of myristoylation. Overexpression in perineurial glia, leads to decreased ethanol sensitivity upon initial exposure and has no effect on ethanol tolerance following repeated exposure in contrast to overexpression of the wild-type form, possibly by delocalizing the protein from the membrane." evidence="3 7">
    <location>
        <begin position="1"/>
        <end position="7"/>
    </location>
</feature>
<feature type="mutagenesis site" description="Loss of phosphorylation by PKC. Overexpression in perineurial glia, results in reduced locomotor sensitization when first exposed to ethanol and ethanol tolerance following repeated exposure; when associated with A-135 and A-137." evidence="3 7">
    <original>S</original>
    <variation>A</variation>
    <location>
        <position position="132"/>
    </location>
</feature>
<feature type="mutagenesis site" description="Overexpression in perineurial glia, leads to decreased ethanol sensitivity upon initial exposure and has no effect on ethanol tolerance following repeated exposure in contrast to overexpression of the wild-type form, possibly by delocalizing the protein from the membrane; when associated with D-135 and D-137." evidence="7">
    <original>S</original>
    <variation>D</variation>
    <location>
        <position position="132"/>
    </location>
</feature>
<feature type="mutagenesis site" description="Partial loss of phosphorylation by PKC; when associated with A-137. Overexpression in perineurial glia, results in reduced locomotor sensitization when first exposed to ethanol and ethanol tolerance following repeated exposure; when associated with A-132 and A-137." evidence="3 7">
    <original>S</original>
    <variation>A</variation>
    <location>
        <position position="135"/>
    </location>
</feature>
<feature type="mutagenesis site" description="Overexpression in perineurial glia, leads to decreased ethanol sensitivity upon initial exposure and has no effect on ethanol tolerance following repeated exposure in contrast to overexpression of the wild-type form, possibly by delocalizing the protein from the membrane; when associated with D-132 and D-137." evidence="7">
    <original>S</original>
    <variation>D</variation>
    <location>
        <position position="135"/>
    </location>
</feature>
<feature type="mutagenesis site" description="Partial loss of phosphorylation by PKC; when associated with A-13A. Overexpression in perineurial glia, results in reduced locomotor sensitization when first exposed to ethanol and ethanol tolerance following repeated exposure; when associated with A-132 and A-135." evidence="3 7">
    <original>S</original>
    <variation>A</variation>
    <location>
        <position position="137"/>
    </location>
</feature>
<feature type="mutagenesis site" description="Overexpression in perineurial glia, leads to decreased ethanol sensitivity upon initial exposure and has no effect on ethanol tolerance following repeated exposure in contrast to overexpression of the wild-type form, possibly by delocalizing the protein from the membrane; when associated with D-132 and D-135." evidence="7">
    <original>S</original>
    <variation>D</variation>
    <location>
        <position position="137"/>
    </location>
</feature>
<feature type="mutagenesis site" description="Partial loss of binding to PKA-R2." evidence="3">
    <original>A</original>
    <variation>S</variation>
    <location>
        <position position="515"/>
    </location>
</feature>
<feature type="mutagenesis site" description="Loss of binding to PKA-R2." evidence="3">
    <original>IV</original>
    <variation>AA</variation>
    <location>
        <begin position="518"/>
        <end position="519"/>
    </location>
</feature>
<feature type="mutagenesis site" description="Partial loss of binding to PKA-R2." evidence="3">
    <original>T</original>
    <variation>A</variation>
    <location>
        <position position="523"/>
    </location>
</feature>
<feature type="sequence conflict" description="In Ref. 1; AAD47200." evidence="9" ref="1">
    <original>G</original>
    <variation>D</variation>
    <location>
        <position position="87"/>
    </location>
</feature>
<sequence>MGKAQSKRSIDITTDPKKVGEGDEVAGKVEKIDVDQKTDAPAVNGDAATPKEGGDEAAAVEKKETEEHSENDKDLTTEKSAAVAEGGDAVAETAKGEEGSPKEAAAGEDITPLADESIKSKSKKDKVKKKWSFRSISFGKKDKQKPAKSEEATSPTSGTTSPTTAEAEAAPAGDAAVAEPSVATNGEAEKPAETATATSEPASKDEKPAENGSATEQEKQANGETEKAAPAPSTVEEAAKPKPAEEPATVTATESNTTATEEVPVKESQPEPEVVTNGHGAGEALTNGSSNGLAESPVTETAPVADNIPSNVDDEPPHQNGTNGTTTPPPTPVATEIEKGQQIEASSEVIETVTPSQAEEEVVAAIIKAVSSEPEAETETETEAEGFVLVAPVSTEVEVPVSISPIEPVAEVSQVKIEPLVEIPEVEAKSVADVSEADTESVPKVSELKTEVSEIEFESVIVETRSSSPPPPLPKSPPPSRVSAFVLSEDVIEEQVTPNVPEVNDVKPDEIEQQAISIVAEITEQAAEIVTEQEKQQEEAKVDSVPETIEESSSTVVVEEVLPVQNDEVTAPSPTPDDVQKPIEDQDTPDEKESYPVPDPIDPAAVNDEVAVTEAVDCEVEKETGSISSNVAESSSVSDEQAAIENQVEILEEQTVAVEETTEQETSDQQVISEEAHSDNDKENEIDLVENIISDLDAPITKAGGDLLVELDARSAEQEGESNNKVDLAKDLKEKNAAAADVTTQEQLPVTCE</sequence>
<name>AK200_DROME</name>
<accession>Q9VLL3</accession>
<accession>Q8IPF5</accession>
<accession>Q9U7E7</accession>
<proteinExistence type="evidence at protein level"/>
<reference evidence="11" key="1">
    <citation type="journal article" date="1999" name="J. Biol. Chem.">
        <title>Generation of a novel A kinase anchor protein and a myristoylated alanine-rich C kinase substrate-like analog from a single gene.</title>
        <authorList>
            <person name="Li Z."/>
            <person name="Rossi E.A."/>
            <person name="Hoheisel J.D."/>
            <person name="Kalderon D."/>
            <person name="Rubin C.S."/>
        </authorList>
    </citation>
    <scope>NUCLEOTIDE SEQUENCE [MRNA] (ISOFORMS A AND B)</scope>
    <scope>FUNCTION</scope>
    <scope>INTERACTION WITH PKA-R2</scope>
    <scope>SUBCELLULAR LOCATION</scope>
    <scope>TISSUE SPECIFICITY</scope>
    <scope>DEVELOPMENTAL STAGE</scope>
    <source>
        <tissue evidence="11">Embryo</tissue>
    </source>
</reference>
<reference evidence="14" key="2">
    <citation type="journal article" date="2000" name="Science">
        <title>The genome sequence of Drosophila melanogaster.</title>
        <authorList>
            <person name="Adams M.D."/>
            <person name="Celniker S.E."/>
            <person name="Holt R.A."/>
            <person name="Evans C.A."/>
            <person name="Gocayne J.D."/>
            <person name="Amanatides P.G."/>
            <person name="Scherer S.E."/>
            <person name="Li P.W."/>
            <person name="Hoskins R.A."/>
            <person name="Galle R.F."/>
            <person name="George R.A."/>
            <person name="Lewis S.E."/>
            <person name="Richards S."/>
            <person name="Ashburner M."/>
            <person name="Henderson S.N."/>
            <person name="Sutton G.G."/>
            <person name="Wortman J.R."/>
            <person name="Yandell M.D."/>
            <person name="Zhang Q."/>
            <person name="Chen L.X."/>
            <person name="Brandon R.C."/>
            <person name="Rogers Y.-H.C."/>
            <person name="Blazej R.G."/>
            <person name="Champe M."/>
            <person name="Pfeiffer B.D."/>
            <person name="Wan K.H."/>
            <person name="Doyle C."/>
            <person name="Baxter E.G."/>
            <person name="Helt G."/>
            <person name="Nelson C.R."/>
            <person name="Miklos G.L.G."/>
            <person name="Abril J.F."/>
            <person name="Agbayani A."/>
            <person name="An H.-J."/>
            <person name="Andrews-Pfannkoch C."/>
            <person name="Baldwin D."/>
            <person name="Ballew R.M."/>
            <person name="Basu A."/>
            <person name="Baxendale J."/>
            <person name="Bayraktaroglu L."/>
            <person name="Beasley E.M."/>
            <person name="Beeson K.Y."/>
            <person name="Benos P.V."/>
            <person name="Berman B.P."/>
            <person name="Bhandari D."/>
            <person name="Bolshakov S."/>
            <person name="Borkova D."/>
            <person name="Botchan M.R."/>
            <person name="Bouck J."/>
            <person name="Brokstein P."/>
            <person name="Brottier P."/>
            <person name="Burtis K.C."/>
            <person name="Busam D.A."/>
            <person name="Butler H."/>
            <person name="Cadieu E."/>
            <person name="Center A."/>
            <person name="Chandra I."/>
            <person name="Cherry J.M."/>
            <person name="Cawley S."/>
            <person name="Dahlke C."/>
            <person name="Davenport L.B."/>
            <person name="Davies P."/>
            <person name="de Pablos B."/>
            <person name="Delcher A."/>
            <person name="Deng Z."/>
            <person name="Mays A.D."/>
            <person name="Dew I."/>
            <person name="Dietz S.M."/>
            <person name="Dodson K."/>
            <person name="Doup L.E."/>
            <person name="Downes M."/>
            <person name="Dugan-Rocha S."/>
            <person name="Dunkov B.C."/>
            <person name="Dunn P."/>
            <person name="Durbin K.J."/>
            <person name="Evangelista C.C."/>
            <person name="Ferraz C."/>
            <person name="Ferriera S."/>
            <person name="Fleischmann W."/>
            <person name="Fosler C."/>
            <person name="Gabrielian A.E."/>
            <person name="Garg N.S."/>
            <person name="Gelbart W.M."/>
            <person name="Glasser K."/>
            <person name="Glodek A."/>
            <person name="Gong F."/>
            <person name="Gorrell J.H."/>
            <person name="Gu Z."/>
            <person name="Guan P."/>
            <person name="Harris M."/>
            <person name="Harris N.L."/>
            <person name="Harvey D.A."/>
            <person name="Heiman T.J."/>
            <person name="Hernandez J.R."/>
            <person name="Houck J."/>
            <person name="Hostin D."/>
            <person name="Houston K.A."/>
            <person name="Howland T.J."/>
            <person name="Wei M.-H."/>
            <person name="Ibegwam C."/>
            <person name="Jalali M."/>
            <person name="Kalush F."/>
            <person name="Karpen G.H."/>
            <person name="Ke Z."/>
            <person name="Kennison J.A."/>
            <person name="Ketchum K.A."/>
            <person name="Kimmel B.E."/>
            <person name="Kodira C.D."/>
            <person name="Kraft C.L."/>
            <person name="Kravitz S."/>
            <person name="Kulp D."/>
            <person name="Lai Z."/>
            <person name="Lasko P."/>
            <person name="Lei Y."/>
            <person name="Levitsky A.A."/>
            <person name="Li J.H."/>
            <person name="Li Z."/>
            <person name="Liang Y."/>
            <person name="Lin X."/>
            <person name="Liu X."/>
            <person name="Mattei B."/>
            <person name="McIntosh T.C."/>
            <person name="McLeod M.P."/>
            <person name="McPherson D."/>
            <person name="Merkulov G."/>
            <person name="Milshina N.V."/>
            <person name="Mobarry C."/>
            <person name="Morris J."/>
            <person name="Moshrefi A."/>
            <person name="Mount S.M."/>
            <person name="Moy M."/>
            <person name="Murphy B."/>
            <person name="Murphy L."/>
            <person name="Muzny D.M."/>
            <person name="Nelson D.L."/>
            <person name="Nelson D.R."/>
            <person name="Nelson K.A."/>
            <person name="Nixon K."/>
            <person name="Nusskern D.R."/>
            <person name="Pacleb J.M."/>
            <person name="Palazzolo M."/>
            <person name="Pittman G.S."/>
            <person name="Pan S."/>
            <person name="Pollard J."/>
            <person name="Puri V."/>
            <person name="Reese M.G."/>
            <person name="Reinert K."/>
            <person name="Remington K."/>
            <person name="Saunders R.D.C."/>
            <person name="Scheeler F."/>
            <person name="Shen H."/>
            <person name="Shue B.C."/>
            <person name="Siden-Kiamos I."/>
            <person name="Simpson M."/>
            <person name="Skupski M.P."/>
            <person name="Smith T.J."/>
            <person name="Spier E."/>
            <person name="Spradling A.C."/>
            <person name="Stapleton M."/>
            <person name="Strong R."/>
            <person name="Sun E."/>
            <person name="Svirskas R."/>
            <person name="Tector C."/>
            <person name="Turner R."/>
            <person name="Venter E."/>
            <person name="Wang A.H."/>
            <person name="Wang X."/>
            <person name="Wang Z.-Y."/>
            <person name="Wassarman D.A."/>
            <person name="Weinstock G.M."/>
            <person name="Weissenbach J."/>
            <person name="Williams S.M."/>
            <person name="Woodage T."/>
            <person name="Worley K.C."/>
            <person name="Wu D."/>
            <person name="Yang S."/>
            <person name="Yao Q.A."/>
            <person name="Ye J."/>
            <person name="Yeh R.-F."/>
            <person name="Zaveri J.S."/>
            <person name="Zhan M."/>
            <person name="Zhang G."/>
            <person name="Zhao Q."/>
            <person name="Zheng L."/>
            <person name="Zheng X.H."/>
            <person name="Zhong F.N."/>
            <person name="Zhong W."/>
            <person name="Zhou X."/>
            <person name="Zhu S.C."/>
            <person name="Zhu X."/>
            <person name="Smith H.O."/>
            <person name="Gibbs R.A."/>
            <person name="Myers E.W."/>
            <person name="Rubin G.M."/>
            <person name="Venter J.C."/>
        </authorList>
    </citation>
    <scope>NUCLEOTIDE SEQUENCE [LARGE SCALE GENOMIC DNA]</scope>
    <source>
        <strain evidence="14">Berkeley</strain>
    </source>
</reference>
<reference evidence="14" key="3">
    <citation type="journal article" date="2002" name="Genome Biol.">
        <title>Annotation of the Drosophila melanogaster euchromatic genome: a systematic review.</title>
        <authorList>
            <person name="Misra S."/>
            <person name="Crosby M.A."/>
            <person name="Mungall C.J."/>
            <person name="Matthews B.B."/>
            <person name="Campbell K.S."/>
            <person name="Hradecky P."/>
            <person name="Huang Y."/>
            <person name="Kaminker J.S."/>
            <person name="Millburn G.H."/>
            <person name="Prochnik S.E."/>
            <person name="Smith C.D."/>
            <person name="Tupy J.L."/>
            <person name="Whitfield E.J."/>
            <person name="Bayraktaroglu L."/>
            <person name="Berman B.P."/>
            <person name="Bettencourt B.R."/>
            <person name="Celniker S.E."/>
            <person name="de Grey A.D.N.J."/>
            <person name="Drysdale R.A."/>
            <person name="Harris N.L."/>
            <person name="Richter J."/>
            <person name="Russo S."/>
            <person name="Schroeder A.J."/>
            <person name="Shu S.Q."/>
            <person name="Stapleton M."/>
            <person name="Yamada C."/>
            <person name="Ashburner M."/>
            <person name="Gelbart W.M."/>
            <person name="Rubin G.M."/>
            <person name="Lewis S.E."/>
        </authorList>
    </citation>
    <scope>GENOME REANNOTATION</scope>
    <source>
        <strain evidence="14">Berkeley</strain>
    </source>
</reference>
<reference evidence="12" key="4">
    <citation type="submission" date="2003-08" db="EMBL/GenBank/DDBJ databases">
        <authorList>
            <person name="Stapleton M."/>
            <person name="Brokstein P."/>
            <person name="Hong L."/>
            <person name="Agbayani A."/>
            <person name="Carlson J."/>
            <person name="Champe M."/>
            <person name="Chavez C."/>
            <person name="Dorsett V."/>
            <person name="Dresnek D."/>
            <person name="Farfan D."/>
            <person name="Frise E."/>
            <person name="George R."/>
            <person name="Gonzalez M."/>
            <person name="Guarin H."/>
            <person name="Kronmiller B."/>
            <person name="Li P."/>
            <person name="Liao G."/>
            <person name="Miranda A."/>
            <person name="Mungall C.J."/>
            <person name="Nunoo J."/>
            <person name="Pacleb J."/>
            <person name="Paragas V."/>
            <person name="Park S."/>
            <person name="Patel S."/>
            <person name="Phouanenavong S."/>
            <person name="Wan K."/>
            <person name="Yu C."/>
            <person name="Lewis S.E."/>
            <person name="Rubin G.M."/>
            <person name="Celniker S."/>
        </authorList>
    </citation>
    <scope>NUCLEOTIDE SEQUENCE [LARGE SCALE MRNA] (ISOFORM A)</scope>
    <source>
        <strain evidence="12">Berkeley</strain>
        <tissue evidence="12">Embryo</tissue>
    </source>
</reference>
<reference evidence="9" key="5">
    <citation type="journal article" date="1999" name="J. Biol. Chem.">
        <title>Characterization of the targeting, binding, and phosphorylation site domains of an A kinase anchor protein and a myristoylated alanine-rich C kinase substrate-like analog that are encoded by a single gene.</title>
        <authorList>
            <person name="Rossi E.A."/>
            <person name="Li Z."/>
            <person name="Feng H."/>
            <person name="Rubin C.S."/>
        </authorList>
    </citation>
    <scope>FUNCTION</scope>
    <scope>INTERACTION WITH PKA-R2; F-ACTIN AND CAM</scope>
    <scope>SUBCELLULAR LOCATION</scope>
    <scope>MYRISTOYLATION AT GLY-2</scope>
    <scope>PHOSPHORYLATION AT SER-132; SER-135 AND SER-137</scope>
    <scope>MUTAGENESIS OF 1-MET--LYS-7; SER-132; SER-135; SER-137; ALA-515; 518-ILE-VAL-519 AND THR-523</scope>
</reference>
<reference evidence="9" key="6">
    <citation type="journal article" date="2002" name="Development">
        <title>An A-kinase anchoring protein is required for protein kinase A regulatory subunit localization and morphology of actin structures during oogenesis in Drosophila.</title>
        <authorList>
            <person name="Jackson S.M."/>
            <person name="Berg C.A."/>
        </authorList>
    </citation>
    <scope>FUNCTION</scope>
    <scope>SUBCELLULAR LOCATION</scope>
    <scope>TISSUE SPECIFICITY</scope>
    <scope>DISRUPTION PHENOTYPE</scope>
</reference>
<reference evidence="9" key="7">
    <citation type="journal article" date="2013" name="J. Biol. Rhythms">
        <title>E and M circadian pacemaker neurons use different PDF receptor signalosome components in drosophila.</title>
        <authorList>
            <person name="Duvall L.B."/>
            <person name="Taghert P.H."/>
        </authorList>
    </citation>
    <scope>FUNCTION</scope>
    <scope>DISRUPTION PHENOTYPE</scope>
</reference>
<reference evidence="9" key="8">
    <citation type="journal article" date="2018" name="Cell Rep.">
        <title>Perineurial Barrier Glia Physically Respond to Alcohol in an Akap200-Dependent Manner to Promote Tolerance.</title>
        <authorList>
            <person name="Parkhurst S.J."/>
            <person name="Adhikari P."/>
            <person name="Navarrete J.S."/>
            <person name="Legendre A."/>
            <person name="Manansala M."/>
            <person name="Wolf F.W."/>
        </authorList>
    </citation>
    <scope>FUNCTION</scope>
    <scope>TISSUE SPECIFICITY</scope>
    <scope>INDUCTION BY ETHANOL</scope>
    <scope>DISRUPTION PHENOTYPE</scope>
    <scope>MUTAGENESIS OF 1-MET--LYS-7; SER-132; SER-135 AND SER-137</scope>
</reference>
<reference evidence="9" key="9">
    <citation type="journal article" date="2018" name="PLoS Genet.">
        <title>AKAP200 promotes Notch stability by protecting it from Cbl/lysosome-mediated degradation in Drosophila melanogaster.</title>
        <authorList>
            <person name="Bala Tannan N."/>
            <person name="Collu G."/>
            <person name="Humphries A.C."/>
            <person name="Serysheva E."/>
            <person name="Weber U."/>
            <person name="Mlodzik M."/>
        </authorList>
    </citation>
    <scope>FUNCTION</scope>
    <scope>INTERACTION WITH N</scope>
    <scope>DISRUPTION PHENOTYPE</scope>
</reference>
<dbReference type="EMBL" id="AF132884">
    <property type="protein sequence ID" value="AAD47200.1"/>
    <property type="molecule type" value="mRNA"/>
</dbReference>
<dbReference type="EMBL" id="AE014134">
    <property type="protein sequence ID" value="AAF52674.3"/>
    <property type="molecule type" value="Genomic_DNA"/>
</dbReference>
<dbReference type="EMBL" id="AE014134">
    <property type="protein sequence ID" value="AAN10668.1"/>
    <property type="molecule type" value="Genomic_DNA"/>
</dbReference>
<dbReference type="EMBL" id="AE014134">
    <property type="protein sequence ID" value="AAN10667.1"/>
    <property type="molecule type" value="Genomic_DNA"/>
</dbReference>
<dbReference type="EMBL" id="AE014134">
    <property type="protein sequence ID" value="AHN54265.1"/>
    <property type="molecule type" value="Genomic_DNA"/>
</dbReference>
<dbReference type="EMBL" id="AE014134">
    <property type="protein sequence ID" value="AHN54266.1"/>
    <property type="molecule type" value="Genomic_DNA"/>
</dbReference>
<dbReference type="EMBL" id="BT010288">
    <property type="protein sequence ID" value="AAQ23606.1"/>
    <property type="molecule type" value="mRNA"/>
</dbReference>
<dbReference type="RefSeq" id="NP_001285751.1">
    <molecule id="Q9VLL3-1"/>
    <property type="nucleotide sequence ID" value="NM_001298822.1"/>
</dbReference>
<dbReference type="RefSeq" id="NP_001285752.1">
    <molecule id="Q9VLL3-2"/>
    <property type="nucleotide sequence ID" value="NM_001298823.1"/>
</dbReference>
<dbReference type="RefSeq" id="NP_477459.1">
    <molecule id="Q9VLL3-2"/>
    <property type="nucleotide sequence ID" value="NM_058111.4"/>
</dbReference>
<dbReference type="RefSeq" id="NP_477460.1">
    <molecule id="Q9VLL3-1"/>
    <property type="nucleotide sequence ID" value="NM_058112.4"/>
</dbReference>
<dbReference type="RefSeq" id="NP_723395.1">
    <molecule id="Q9VLL3-2"/>
    <property type="nucleotide sequence ID" value="NM_164820.2"/>
</dbReference>
<dbReference type="FunCoup" id="Q9VLL3">
    <property type="interactions" value="127"/>
</dbReference>
<dbReference type="IntAct" id="Q9VLL3">
    <property type="interactions" value="185"/>
</dbReference>
<dbReference type="STRING" id="7227.FBpp0079282"/>
<dbReference type="GlyGen" id="Q9VLL3">
    <property type="glycosylation" value="4 sites, 1 O-linked glycan (1 site)"/>
</dbReference>
<dbReference type="iPTMnet" id="Q9VLL3"/>
<dbReference type="PaxDb" id="7227-FBpp0079282"/>
<dbReference type="DNASU" id="34170"/>
<dbReference type="EnsemblMetazoa" id="FBtr0079664">
    <molecule id="Q9VLL3-1"/>
    <property type="protein sequence ID" value="FBpp0079279"/>
    <property type="gene ID" value="FBgn0027932"/>
</dbReference>
<dbReference type="EnsemblMetazoa" id="FBtr0079665">
    <molecule id="Q9VLL3-2"/>
    <property type="protein sequence ID" value="FBpp0079280"/>
    <property type="gene ID" value="FBgn0027932"/>
</dbReference>
<dbReference type="EnsemblMetazoa" id="FBtr0079666">
    <molecule id="Q9VLL3-2"/>
    <property type="protein sequence ID" value="FBpp0079281"/>
    <property type="gene ID" value="FBgn0027932"/>
</dbReference>
<dbReference type="EnsemblMetazoa" id="FBtr0340239">
    <molecule id="Q9VLL3-1"/>
    <property type="protein sequence ID" value="FBpp0309213"/>
    <property type="gene ID" value="FBgn0027932"/>
</dbReference>
<dbReference type="EnsemblMetazoa" id="FBtr0340240">
    <molecule id="Q9VLL3-2"/>
    <property type="protein sequence ID" value="FBpp0309214"/>
    <property type="gene ID" value="FBgn0027932"/>
</dbReference>
<dbReference type="GeneID" id="34170"/>
<dbReference type="KEGG" id="dme:Dmel_CG13388"/>
<dbReference type="UCSC" id="CG13388-RA">
    <molecule id="Q9VLL3-1"/>
    <property type="organism name" value="d. melanogaster"/>
</dbReference>
<dbReference type="UCSC" id="CG13388-RB">
    <property type="organism name" value="d. melanogaster"/>
</dbReference>
<dbReference type="AGR" id="FB:FBgn0027932"/>
<dbReference type="CTD" id="34170"/>
<dbReference type="FlyBase" id="FBgn0027932">
    <property type="gene designation" value="Akap200"/>
</dbReference>
<dbReference type="VEuPathDB" id="VectorBase:FBgn0027932"/>
<dbReference type="HOGENOM" id="CLU_333523_0_0_1"/>
<dbReference type="InParanoid" id="Q9VLL3"/>
<dbReference type="OrthoDB" id="8196194at2759"/>
<dbReference type="PhylomeDB" id="Q9VLL3"/>
<dbReference type="SignaLink" id="Q9VLL3"/>
<dbReference type="BioGRID-ORCS" id="34170">
    <property type="hits" value="0 hits in 1 CRISPR screen"/>
</dbReference>
<dbReference type="ChiTaRS" id="Akap200">
    <property type="organism name" value="fly"/>
</dbReference>
<dbReference type="GenomeRNAi" id="34170"/>
<dbReference type="PRO" id="PR:Q9VLL3"/>
<dbReference type="Proteomes" id="UP000000803">
    <property type="component" value="Chromosome 2L"/>
</dbReference>
<dbReference type="Bgee" id="FBgn0027932">
    <property type="expression patterns" value="Expressed in wing disc and 238 other cell types or tissues"/>
</dbReference>
<dbReference type="ExpressionAtlas" id="Q9VLL3">
    <property type="expression patterns" value="baseline and differential"/>
</dbReference>
<dbReference type="GO" id="GO:0005737">
    <property type="term" value="C:cytoplasm"/>
    <property type="evidence" value="ECO:0007005"/>
    <property type="project" value="FlyBase"/>
</dbReference>
<dbReference type="GO" id="GO:0005856">
    <property type="term" value="C:cytoskeleton"/>
    <property type="evidence" value="ECO:0000314"/>
    <property type="project" value="UniProtKB"/>
</dbReference>
<dbReference type="GO" id="GO:0005829">
    <property type="term" value="C:cytosol"/>
    <property type="evidence" value="ECO:0000314"/>
    <property type="project" value="UniProtKB"/>
</dbReference>
<dbReference type="GO" id="GO:0005886">
    <property type="term" value="C:plasma membrane"/>
    <property type="evidence" value="ECO:0000314"/>
    <property type="project" value="UniProtKB"/>
</dbReference>
<dbReference type="GO" id="GO:0051015">
    <property type="term" value="F:actin filament binding"/>
    <property type="evidence" value="ECO:0000314"/>
    <property type="project" value="UniProtKB"/>
</dbReference>
<dbReference type="GO" id="GO:0005112">
    <property type="term" value="F:Notch binding"/>
    <property type="evidence" value="ECO:0000353"/>
    <property type="project" value="UniProtKB"/>
</dbReference>
<dbReference type="GO" id="GO:0034237">
    <property type="term" value="F:protein kinase A regulatory subunit binding"/>
    <property type="evidence" value="ECO:0000353"/>
    <property type="project" value="UniProtKB"/>
</dbReference>
<dbReference type="GO" id="GO:0048149">
    <property type="term" value="P:behavioral response to ethanol"/>
    <property type="evidence" value="ECO:0000315"/>
    <property type="project" value="FlyBase"/>
</dbReference>
<dbReference type="GO" id="GO:0071361">
    <property type="term" value="P:cellular response to ethanol"/>
    <property type="evidence" value="ECO:0000315"/>
    <property type="project" value="UniProtKB"/>
</dbReference>
<dbReference type="GO" id="GO:0007623">
    <property type="term" value="P:circadian rhythm"/>
    <property type="evidence" value="ECO:0000315"/>
    <property type="project" value="UniProtKB"/>
</dbReference>
<dbReference type="GO" id="GO:0007281">
    <property type="term" value="P:germ cell development"/>
    <property type="evidence" value="ECO:0000315"/>
    <property type="project" value="UniProtKB"/>
</dbReference>
<dbReference type="GO" id="GO:0045747">
    <property type="term" value="P:positive regulation of Notch signaling pathway"/>
    <property type="evidence" value="ECO:0000314"/>
    <property type="project" value="UniProtKB"/>
</dbReference>
<dbReference type="GO" id="GO:1905477">
    <property type="term" value="P:positive regulation of protein localization to membrane"/>
    <property type="evidence" value="ECO:0000315"/>
    <property type="project" value="UniProtKB"/>
</dbReference>
<dbReference type="GO" id="GO:0032956">
    <property type="term" value="P:regulation of actin cytoskeleton organization"/>
    <property type="evidence" value="ECO:0000315"/>
    <property type="project" value="UniProtKB"/>
</dbReference>
<comment type="function">
    <text evidence="2 3 4 5 6 7">Scaffolding protein involved in the regulation of PKA signaling and anchoring to the actin cytoskeleton integrating signals propagated by cAMP, diacylglycerol and calcium (PubMed:10480936, PubMed:10480937, PubMed:12223401). Contributes to the maintenance and regulation of cytoskeletal structures in germline via PKA-mediated signaling (PubMed:12223401). As part of ethanol response in the glia, mediates ethanol-induced structural remodeling of actin cytoskeleton and perineurial membrane topology by anchoring PKA to the membrane of perineurial glia (PubMed:29444420). In specific tissues such as eye and thorax, promotes N/Notch protein stability by inhibiting Cbl-mediated ubiquitination and lysosomal degradation pathway of N/Notch in a PKA-independent way (PubMed:29309414). In the circadian brain neurons evening cells (E-cells), might have a role in circadian pacemaker synchronization by playing a redundant role in signaling downstream of the G protein-couple receptor Pdfr (PubMed:23929551).</text>
</comment>
<comment type="subunit">
    <text evidence="2 3 6">Homodimer (PubMed:10480937). Interacts with Cam; interaction is calcium-dependent and is inhibited by PKC-mediated phosphorylation of Akap200 (PubMed:10480937). Interacts with N/Notch; the interaction stabilizes N/Notch protein levels by preventing Cbl-mediated ubiquitination and subsequent lysosomal degradation of N/Notch (PubMed:29309414). Interacts with Pka-R2 (PubMed:10480936, PubMed:10480937). Binds to F-actin; interaction is independent of myristoylation, but is inhibited by Akap200 phosphorylation and Cam binding (PubMed:10480937). Isoform B: Does not bind to Pka-R2 (PubMed:10480936).</text>
</comment>
<comment type="subcellular location">
    <subcellularLocation>
        <location evidence="2 3 4">Cytoplasm</location>
        <location evidence="2 3 4">Cytosol</location>
    </subcellularLocation>
    <subcellularLocation>
        <location evidence="3 4">Cell membrane</location>
        <topology evidence="3 4">Lipid-anchor</topology>
    </subcellularLocation>
    <subcellularLocation>
        <location evidence="10">Cytoplasm</location>
        <location evidence="10">Cytoskeleton</location>
    </subcellularLocation>
</comment>
<comment type="alternative products">
    <event type="alternative splicing"/>
    <isoform>
        <id>Q9VLL3-1</id>
        <name evidence="13">A</name>
        <name evidence="13">C</name>
        <name evidence="13">F</name>
        <name evidence="7">Akap200L</name>
        <sequence type="displayed"/>
    </isoform>
    <isoform>
        <id>Q9VLL3-2</id>
        <name evidence="13">B</name>
        <name evidence="13">E</name>
        <name evidence="7">Akap200S</name>
        <sequence type="described" ref="VSP_059969"/>
    </isoform>
</comment>
<comment type="tissue specificity">
    <text evidence="2 4 7">Detected in the brain in both neurons and glia (including perineurial glia); specifically in the neuronal nuclei in the cortex and synaptic neuropil (at protein level) (PubMed:29444420). Detected in germline cells, somatic follicle cells and outer rim of the ring canals during oogenesis (at protein level) (PubMed:12223401). Isoform A: Detected in the adult (at protein level) (PubMed:10480936). Isoform B: Detected in the adult with higher levels in the head (at protein level) (PubMed:10480936).</text>
</comment>
<comment type="developmental stage">
    <text evidence="2">Isoform A: Detected in all stages of development, with higher levels in the pupae (at protein level) (PubMed:10480936). Isoform B: Detected in all stages of development (at protein level) (PubMed:10480936).</text>
</comment>
<comment type="induction">
    <text evidence="7">By ethanol.</text>
</comment>
<comment type="PTM">
    <text evidence="3">Myristoylated; myristoylation promotes accumulation at the cell periphery.</text>
</comment>
<comment type="PTM">
    <text evidence="3">Phosphorylated; phosphorylation prevents binding to F-actin and Cam.</text>
</comment>
<comment type="disruption phenotype">
    <text evidence="4 5 6 7">Viable (PubMed:12223401, PubMed:29309414). Results in extra notal macrochaetae often accompanied by a socket cell (PubMed:12223401). In the eye, results in decreased N/Notch protein levels and ommatidia defects (PubMed:29309414). In all imaginal disks at early larval stages, results in supernumerary scutellar bristles and loss or mispositioned microchaetae (PubMed:29309414). In the wings, results in a blistered phenotype (PubMed:29309414). Females have egg chambers with multinucleate cells with ring canal remnants (PubMed:12223401). RNAi-mediated knockdown in glia or perineurial glia reduces ethanol tolerance and locomotor sensitization possibly by limiting ethanol-induced membrane topology changes; does not affect perineurial morphology; does not affect glia-mediated blood-brain barrier permeability (PubMed:29444420). RNAi-mediated knockdown in neurons does not alter ethanol sedation sensitivity or tolerance (PubMed:29444420). RNAi-mediated knockdown in the pacemaker dorsal lateral neurons (LNDs) results in reduced pigment-dispersing factor receptor (Pdfr)-mediated response in the circadian brain neuron evening cells (E-cells) (PubMed:23929551).</text>
</comment>
<protein>
    <recommendedName>
        <fullName evidence="8 13">A-kinase anchor protein 200</fullName>
    </recommendedName>
</protein>
<gene>
    <name evidence="8 13" type="primary">Akap200</name>
    <name evidence="13" type="synonym">MESR2</name>
    <name evidence="13" type="ORF">CG13388</name>
</gene>
<keyword id="KW-0025">Alternative splicing</keyword>
<keyword id="KW-1003">Cell membrane</keyword>
<keyword id="KW-0963">Cytoplasm</keyword>
<keyword id="KW-0206">Cytoskeleton</keyword>
<keyword id="KW-0449">Lipoprotein</keyword>
<keyword id="KW-0472">Membrane</keyword>
<keyword id="KW-0519">Myristate</keyword>
<keyword id="KW-0597">Phosphoprotein</keyword>
<keyword id="KW-1185">Reference proteome</keyword>
<evidence type="ECO:0000256" key="1">
    <source>
        <dbReference type="SAM" id="MobiDB-lite"/>
    </source>
</evidence>
<evidence type="ECO:0000269" key="2">
    <source>
    </source>
</evidence>
<evidence type="ECO:0000269" key="3">
    <source>
    </source>
</evidence>
<evidence type="ECO:0000269" key="4">
    <source>
    </source>
</evidence>
<evidence type="ECO:0000269" key="5">
    <source>
    </source>
</evidence>
<evidence type="ECO:0000269" key="6">
    <source>
    </source>
</evidence>
<evidence type="ECO:0000269" key="7">
    <source>
    </source>
</evidence>
<evidence type="ECO:0000303" key="8">
    <source>
    </source>
</evidence>
<evidence type="ECO:0000305" key="9"/>
<evidence type="ECO:0000305" key="10">
    <source>
    </source>
</evidence>
<evidence type="ECO:0000312" key="11">
    <source>
        <dbReference type="EMBL" id="AAD47200.1"/>
    </source>
</evidence>
<evidence type="ECO:0000312" key="12">
    <source>
        <dbReference type="EMBL" id="AAQ23606.1"/>
    </source>
</evidence>
<evidence type="ECO:0000312" key="13">
    <source>
        <dbReference type="FlyBase" id="FBgn0027932"/>
    </source>
</evidence>
<evidence type="ECO:0000312" key="14">
    <source>
        <dbReference type="Proteomes" id="UP000000803"/>
    </source>
</evidence>